<dbReference type="EC" id="3.6.-.-" evidence="1"/>
<dbReference type="EMBL" id="AE008922">
    <property type="protein sequence ID" value="AAM43454.1"/>
    <property type="molecule type" value="Genomic_DNA"/>
</dbReference>
<dbReference type="RefSeq" id="NP_639572.1">
    <property type="nucleotide sequence ID" value="NC_003902.1"/>
</dbReference>
<dbReference type="RefSeq" id="WP_011039299.1">
    <property type="nucleotide sequence ID" value="NC_003902.1"/>
</dbReference>
<dbReference type="SMR" id="Q8P340"/>
<dbReference type="STRING" id="190485.XCC4238"/>
<dbReference type="EnsemblBacteria" id="AAM43454">
    <property type="protein sequence ID" value="AAM43454"/>
    <property type="gene ID" value="XCC4238"/>
</dbReference>
<dbReference type="KEGG" id="xcc:XCC4238"/>
<dbReference type="PATRIC" id="fig|190485.4.peg.4551"/>
<dbReference type="eggNOG" id="COG0486">
    <property type="taxonomic scope" value="Bacteria"/>
</dbReference>
<dbReference type="HOGENOM" id="CLU_019624_4_1_6"/>
<dbReference type="OrthoDB" id="9805918at2"/>
<dbReference type="Proteomes" id="UP000001010">
    <property type="component" value="Chromosome"/>
</dbReference>
<dbReference type="GO" id="GO:0005737">
    <property type="term" value="C:cytoplasm"/>
    <property type="evidence" value="ECO:0000318"/>
    <property type="project" value="GO_Central"/>
</dbReference>
<dbReference type="GO" id="GO:0005829">
    <property type="term" value="C:cytosol"/>
    <property type="evidence" value="ECO:0000318"/>
    <property type="project" value="GO_Central"/>
</dbReference>
<dbReference type="GO" id="GO:0005525">
    <property type="term" value="F:GTP binding"/>
    <property type="evidence" value="ECO:0007669"/>
    <property type="project" value="UniProtKB-UniRule"/>
</dbReference>
<dbReference type="GO" id="GO:0003924">
    <property type="term" value="F:GTPase activity"/>
    <property type="evidence" value="ECO:0007669"/>
    <property type="project" value="UniProtKB-UniRule"/>
</dbReference>
<dbReference type="GO" id="GO:0046872">
    <property type="term" value="F:metal ion binding"/>
    <property type="evidence" value="ECO:0007669"/>
    <property type="project" value="UniProtKB-KW"/>
</dbReference>
<dbReference type="GO" id="GO:0030488">
    <property type="term" value="P:tRNA methylation"/>
    <property type="evidence" value="ECO:0000318"/>
    <property type="project" value="GO_Central"/>
</dbReference>
<dbReference type="GO" id="GO:0002098">
    <property type="term" value="P:tRNA wobble uridine modification"/>
    <property type="evidence" value="ECO:0000318"/>
    <property type="project" value="GO_Central"/>
</dbReference>
<dbReference type="CDD" id="cd04164">
    <property type="entry name" value="trmE"/>
    <property type="match status" value="1"/>
</dbReference>
<dbReference type="CDD" id="cd14858">
    <property type="entry name" value="TrmE_N"/>
    <property type="match status" value="1"/>
</dbReference>
<dbReference type="FunFam" id="3.40.50.300:FF:001376">
    <property type="entry name" value="tRNA modification GTPase MnmE"/>
    <property type="match status" value="1"/>
</dbReference>
<dbReference type="Gene3D" id="3.40.50.300">
    <property type="entry name" value="P-loop containing nucleotide triphosphate hydrolases"/>
    <property type="match status" value="1"/>
</dbReference>
<dbReference type="Gene3D" id="3.30.1360.120">
    <property type="entry name" value="Probable tRNA modification gtpase trme, domain 1"/>
    <property type="match status" value="1"/>
</dbReference>
<dbReference type="Gene3D" id="1.20.120.430">
    <property type="entry name" value="tRNA modification GTPase MnmE domain 2"/>
    <property type="match status" value="1"/>
</dbReference>
<dbReference type="HAMAP" id="MF_00379">
    <property type="entry name" value="GTPase_MnmE"/>
    <property type="match status" value="1"/>
</dbReference>
<dbReference type="InterPro" id="IPR031168">
    <property type="entry name" value="G_TrmE"/>
</dbReference>
<dbReference type="InterPro" id="IPR006073">
    <property type="entry name" value="GTP-bd"/>
</dbReference>
<dbReference type="InterPro" id="IPR018948">
    <property type="entry name" value="GTP-bd_TrmE_N"/>
</dbReference>
<dbReference type="InterPro" id="IPR004520">
    <property type="entry name" value="GTPase_MnmE"/>
</dbReference>
<dbReference type="InterPro" id="IPR027368">
    <property type="entry name" value="MnmE_dom2"/>
</dbReference>
<dbReference type="InterPro" id="IPR025867">
    <property type="entry name" value="MnmE_helical"/>
</dbReference>
<dbReference type="InterPro" id="IPR027417">
    <property type="entry name" value="P-loop_NTPase"/>
</dbReference>
<dbReference type="InterPro" id="IPR005225">
    <property type="entry name" value="Small_GTP-bd"/>
</dbReference>
<dbReference type="InterPro" id="IPR027266">
    <property type="entry name" value="TrmE/GcvT_dom1"/>
</dbReference>
<dbReference type="NCBIfam" id="TIGR00450">
    <property type="entry name" value="mnmE_trmE_thdF"/>
    <property type="match status" value="1"/>
</dbReference>
<dbReference type="NCBIfam" id="NF003661">
    <property type="entry name" value="PRK05291.1-3"/>
    <property type="match status" value="1"/>
</dbReference>
<dbReference type="NCBIfam" id="TIGR00231">
    <property type="entry name" value="small_GTP"/>
    <property type="match status" value="1"/>
</dbReference>
<dbReference type="PANTHER" id="PTHR42714">
    <property type="entry name" value="TRNA MODIFICATION GTPASE GTPBP3"/>
    <property type="match status" value="1"/>
</dbReference>
<dbReference type="PANTHER" id="PTHR42714:SF2">
    <property type="entry name" value="TRNA MODIFICATION GTPASE GTPBP3, MITOCHONDRIAL"/>
    <property type="match status" value="1"/>
</dbReference>
<dbReference type="Pfam" id="PF01926">
    <property type="entry name" value="MMR_HSR1"/>
    <property type="match status" value="1"/>
</dbReference>
<dbReference type="Pfam" id="PF12631">
    <property type="entry name" value="MnmE_helical"/>
    <property type="match status" value="1"/>
</dbReference>
<dbReference type="Pfam" id="PF10396">
    <property type="entry name" value="TrmE_N"/>
    <property type="match status" value="1"/>
</dbReference>
<dbReference type="PRINTS" id="PR00326">
    <property type="entry name" value="GTP1OBG"/>
</dbReference>
<dbReference type="SUPFAM" id="SSF52540">
    <property type="entry name" value="P-loop containing nucleoside triphosphate hydrolases"/>
    <property type="match status" value="1"/>
</dbReference>
<dbReference type="PROSITE" id="PS51709">
    <property type="entry name" value="G_TRME"/>
    <property type="match status" value="1"/>
</dbReference>
<keyword id="KW-0963">Cytoplasm</keyword>
<keyword id="KW-0342">GTP-binding</keyword>
<keyword id="KW-0378">Hydrolase</keyword>
<keyword id="KW-0460">Magnesium</keyword>
<keyword id="KW-0479">Metal-binding</keyword>
<keyword id="KW-0547">Nucleotide-binding</keyword>
<keyword id="KW-0630">Potassium</keyword>
<keyword id="KW-1185">Reference proteome</keyword>
<keyword id="KW-0819">tRNA processing</keyword>
<comment type="function">
    <text evidence="1">Exhibits a very high intrinsic GTPase hydrolysis rate. Involved in the addition of a carboxymethylaminomethyl (cmnm) group at the wobble position (U34) of certain tRNAs, forming tRNA-cmnm(5)s(2)U34.</text>
</comment>
<comment type="cofactor">
    <cofactor evidence="1">
        <name>K(+)</name>
        <dbReference type="ChEBI" id="CHEBI:29103"/>
    </cofactor>
    <text evidence="1">Binds 1 potassium ion per subunit.</text>
</comment>
<comment type="subunit">
    <text evidence="1">Homodimer. Heterotetramer of two MnmE and two MnmG subunits.</text>
</comment>
<comment type="subcellular location">
    <subcellularLocation>
        <location evidence="1">Cytoplasm</location>
    </subcellularLocation>
</comment>
<comment type="similarity">
    <text evidence="1">Belongs to the TRAFAC class TrmE-Era-EngA-EngB-Septin-like GTPase superfamily. TrmE GTPase family.</text>
</comment>
<evidence type="ECO:0000255" key="1">
    <source>
        <dbReference type="HAMAP-Rule" id="MF_00379"/>
    </source>
</evidence>
<protein>
    <recommendedName>
        <fullName evidence="1">tRNA modification GTPase MnmE</fullName>
        <ecNumber evidence="1">3.6.-.-</ecNumber>
    </recommendedName>
</protein>
<organism>
    <name type="scientific">Xanthomonas campestris pv. campestris (strain ATCC 33913 / DSM 3586 / NCPPB 528 / LMG 568 / P 25)</name>
    <dbReference type="NCBI Taxonomy" id="190485"/>
    <lineage>
        <taxon>Bacteria</taxon>
        <taxon>Pseudomonadati</taxon>
        <taxon>Pseudomonadota</taxon>
        <taxon>Gammaproteobacteria</taxon>
        <taxon>Lysobacterales</taxon>
        <taxon>Lysobacteraceae</taxon>
        <taxon>Xanthomonas</taxon>
    </lineage>
</organism>
<reference key="1">
    <citation type="journal article" date="2002" name="Nature">
        <title>Comparison of the genomes of two Xanthomonas pathogens with differing host specificities.</title>
        <authorList>
            <person name="da Silva A.C.R."/>
            <person name="Ferro J.A."/>
            <person name="Reinach F.C."/>
            <person name="Farah C.S."/>
            <person name="Furlan L.R."/>
            <person name="Quaggio R.B."/>
            <person name="Monteiro-Vitorello C.B."/>
            <person name="Van Sluys M.A."/>
            <person name="Almeida N.F. Jr."/>
            <person name="Alves L.M.C."/>
            <person name="do Amaral A.M."/>
            <person name="Bertolini M.C."/>
            <person name="Camargo L.E.A."/>
            <person name="Camarotte G."/>
            <person name="Cannavan F."/>
            <person name="Cardozo J."/>
            <person name="Chambergo F."/>
            <person name="Ciapina L.P."/>
            <person name="Cicarelli R.M.B."/>
            <person name="Coutinho L.L."/>
            <person name="Cursino-Santos J.R."/>
            <person name="El-Dorry H."/>
            <person name="Faria J.B."/>
            <person name="Ferreira A.J.S."/>
            <person name="Ferreira R.C.C."/>
            <person name="Ferro M.I.T."/>
            <person name="Formighieri E.F."/>
            <person name="Franco M.C."/>
            <person name="Greggio C.C."/>
            <person name="Gruber A."/>
            <person name="Katsuyama A.M."/>
            <person name="Kishi L.T."/>
            <person name="Leite R.P."/>
            <person name="Lemos E.G.M."/>
            <person name="Lemos M.V.F."/>
            <person name="Locali E.C."/>
            <person name="Machado M.A."/>
            <person name="Madeira A.M.B.N."/>
            <person name="Martinez-Rossi N.M."/>
            <person name="Martins E.C."/>
            <person name="Meidanis J."/>
            <person name="Menck C.F.M."/>
            <person name="Miyaki C.Y."/>
            <person name="Moon D.H."/>
            <person name="Moreira L.M."/>
            <person name="Novo M.T.M."/>
            <person name="Okura V.K."/>
            <person name="Oliveira M.C."/>
            <person name="Oliveira V.R."/>
            <person name="Pereira H.A."/>
            <person name="Rossi A."/>
            <person name="Sena J.A.D."/>
            <person name="Silva C."/>
            <person name="de Souza R.F."/>
            <person name="Spinola L.A.F."/>
            <person name="Takita M.A."/>
            <person name="Tamura R.E."/>
            <person name="Teixeira E.C."/>
            <person name="Tezza R.I.D."/>
            <person name="Trindade dos Santos M."/>
            <person name="Truffi D."/>
            <person name="Tsai S.M."/>
            <person name="White F.F."/>
            <person name="Setubal J.C."/>
            <person name="Kitajima J.P."/>
        </authorList>
    </citation>
    <scope>NUCLEOTIDE SEQUENCE [LARGE SCALE GENOMIC DNA]</scope>
    <source>
        <strain>ATCC 33913 / DSM 3586 / NCPPB 528 / LMG 568 / P 25</strain>
    </source>
</reference>
<feature type="chain" id="PRO_0000188949" description="tRNA modification GTPase MnmE">
    <location>
        <begin position="1"/>
        <end position="446"/>
    </location>
</feature>
<feature type="domain" description="TrmE-type G">
    <location>
        <begin position="216"/>
        <end position="368"/>
    </location>
</feature>
<feature type="binding site" evidence="1">
    <location>
        <position position="24"/>
    </location>
    <ligand>
        <name>(6S)-5-formyl-5,6,7,8-tetrahydrofolate</name>
        <dbReference type="ChEBI" id="CHEBI:57457"/>
    </ligand>
</feature>
<feature type="binding site" evidence="1">
    <location>
        <position position="81"/>
    </location>
    <ligand>
        <name>(6S)-5-formyl-5,6,7,8-tetrahydrofolate</name>
        <dbReference type="ChEBI" id="CHEBI:57457"/>
    </ligand>
</feature>
<feature type="binding site" evidence="1">
    <location>
        <position position="120"/>
    </location>
    <ligand>
        <name>(6S)-5-formyl-5,6,7,8-tetrahydrofolate</name>
        <dbReference type="ChEBI" id="CHEBI:57457"/>
    </ligand>
</feature>
<feature type="binding site" evidence="1">
    <location>
        <begin position="226"/>
        <end position="231"/>
    </location>
    <ligand>
        <name>GTP</name>
        <dbReference type="ChEBI" id="CHEBI:37565"/>
    </ligand>
</feature>
<feature type="binding site" evidence="1">
    <location>
        <position position="226"/>
    </location>
    <ligand>
        <name>K(+)</name>
        <dbReference type="ChEBI" id="CHEBI:29103"/>
    </ligand>
</feature>
<feature type="binding site" evidence="1">
    <location>
        <position position="230"/>
    </location>
    <ligand>
        <name>Mg(2+)</name>
        <dbReference type="ChEBI" id="CHEBI:18420"/>
    </ligand>
</feature>
<feature type="binding site" evidence="1">
    <location>
        <begin position="245"/>
        <end position="251"/>
    </location>
    <ligand>
        <name>GTP</name>
        <dbReference type="ChEBI" id="CHEBI:37565"/>
    </ligand>
</feature>
<feature type="binding site" evidence="1">
    <location>
        <position position="245"/>
    </location>
    <ligand>
        <name>K(+)</name>
        <dbReference type="ChEBI" id="CHEBI:29103"/>
    </ligand>
</feature>
<feature type="binding site" evidence="1">
    <location>
        <position position="247"/>
    </location>
    <ligand>
        <name>K(+)</name>
        <dbReference type="ChEBI" id="CHEBI:29103"/>
    </ligand>
</feature>
<feature type="binding site" evidence="1">
    <location>
        <position position="250"/>
    </location>
    <ligand>
        <name>K(+)</name>
        <dbReference type="ChEBI" id="CHEBI:29103"/>
    </ligand>
</feature>
<feature type="binding site" evidence="1">
    <location>
        <position position="251"/>
    </location>
    <ligand>
        <name>Mg(2+)</name>
        <dbReference type="ChEBI" id="CHEBI:18420"/>
    </ligand>
</feature>
<feature type="binding site" evidence="1">
    <location>
        <begin position="270"/>
        <end position="273"/>
    </location>
    <ligand>
        <name>GTP</name>
        <dbReference type="ChEBI" id="CHEBI:37565"/>
    </ligand>
</feature>
<feature type="binding site" evidence="1">
    <location>
        <position position="446"/>
    </location>
    <ligand>
        <name>(6S)-5-formyl-5,6,7,8-tetrahydrofolate</name>
        <dbReference type="ChEBI" id="CHEBI:57457"/>
    </ligand>
</feature>
<name>MNME_XANCP</name>
<accession>Q8P340</accession>
<gene>
    <name evidence="1" type="primary">mnmE</name>
    <name evidence="1" type="synonym">thdF</name>
    <name evidence="1" type="synonym">trmE</name>
    <name type="ordered locus">XCC4238</name>
</gene>
<sequence>MNALPSTIVAIATAAGTGGIGIVRLSGPQSVQIAAALGIAGLQSRHARYARFRDAQGEVIDDGIAVWFPAPHSFTGEEVVELQGHGSPVLLRQLVARCIALGARQARAGEFSERAFLNGKLDLAQAEAIADLIAAGDLRAARAARRSLDGVFSRRVDAVSESLTRLRIHVEAAIDFADEPLDTLGGAQVREELTRTRALLAQLLRDAERGRKLRDGLHAVLIGPPNAGKSSLLNALAGSDRAIVTDVAGTTRDTLHEAIQLDGFELTLVDTAGLREGGDAIEREGMRRARAELQRADLALIVLDARDPQAARDALGDAIDAVPRRLWIHNKCDLLAVAGPMDADAIAVSAVTGQGLEHLHTRLRELALGDGIESVDGEFSARTRHVDALHRAEQHADAADLELRYEQLELAAEELRLAHEALGEITGKLSADDLLGKIFSSFCIGK</sequence>
<proteinExistence type="inferred from homology"/>